<accession>Q9JX23</accession>
<accession>A1INV5</accession>
<gene>
    <name evidence="1" type="primary">zupT</name>
    <name type="ordered locus">NMA0093</name>
</gene>
<evidence type="ECO:0000255" key="1">
    <source>
        <dbReference type="HAMAP-Rule" id="MF_00548"/>
    </source>
</evidence>
<evidence type="ECO:0000305" key="2"/>
<proteinExistence type="inferred from homology"/>
<reference key="1">
    <citation type="journal article" date="2000" name="Nature">
        <title>Complete DNA sequence of a serogroup A strain of Neisseria meningitidis Z2491.</title>
        <authorList>
            <person name="Parkhill J."/>
            <person name="Achtman M."/>
            <person name="James K.D."/>
            <person name="Bentley S.D."/>
            <person name="Churcher C.M."/>
            <person name="Klee S.R."/>
            <person name="Morelli G."/>
            <person name="Basham D."/>
            <person name="Brown D."/>
            <person name="Chillingworth T."/>
            <person name="Davies R.M."/>
            <person name="Davis P."/>
            <person name="Devlin K."/>
            <person name="Feltwell T."/>
            <person name="Hamlin N."/>
            <person name="Holroyd S."/>
            <person name="Jagels K."/>
            <person name="Leather S."/>
            <person name="Moule S."/>
            <person name="Mungall K.L."/>
            <person name="Quail M.A."/>
            <person name="Rajandream M.A."/>
            <person name="Rutherford K.M."/>
            <person name="Simmonds M."/>
            <person name="Skelton J."/>
            <person name="Whitehead S."/>
            <person name="Spratt B.G."/>
            <person name="Barrell B.G."/>
        </authorList>
    </citation>
    <scope>NUCLEOTIDE SEQUENCE [LARGE SCALE GENOMIC DNA]</scope>
    <source>
        <strain>DSM 15465 / Z2491</strain>
    </source>
</reference>
<protein>
    <recommendedName>
        <fullName evidence="1">Zinc transporter ZupT</fullName>
    </recommendedName>
</protein>
<sequence length="269" mass="28455">MPDFSMSNLAVAFSITLAAGLFTVLGSGLVMFSKTPNPRVLSFGLAFAGGAMVYVSLTEIFSKSSEAFAEIYDKDHAFAAATMAFLAGMGGIALIDRLVPNPHETLDAQDPSFQESKRRHIARVGMMAAFAITAHNFPEGLATFFATLENPAVGMPLALAIAIHNIPEGISIAAPVYFATRSRKKTVWACLLSGLAEPLGAALGYLVLQPFLSPAVFGSVFGVIAGVMVFLALDELLPAAKRYSDGHETVYGLTMGMAVIAVSLVLFHF</sequence>
<dbReference type="EMBL" id="AL157959">
    <property type="protein sequence ID" value="CAM07412.1"/>
    <property type="molecule type" value="Genomic_DNA"/>
</dbReference>
<dbReference type="PIR" id="D82001">
    <property type="entry name" value="D82001"/>
</dbReference>
<dbReference type="RefSeq" id="WP_002215472.1">
    <property type="nucleotide sequence ID" value="NC_003116.1"/>
</dbReference>
<dbReference type="SMR" id="Q9JX23"/>
<dbReference type="EnsemblBacteria" id="CAM07412">
    <property type="protein sequence ID" value="CAM07412"/>
    <property type="gene ID" value="NMA0093"/>
</dbReference>
<dbReference type="GeneID" id="93387252"/>
<dbReference type="KEGG" id="nma:NMA0093"/>
<dbReference type="HOGENOM" id="CLU_015114_1_3_4"/>
<dbReference type="Proteomes" id="UP000000626">
    <property type="component" value="Chromosome"/>
</dbReference>
<dbReference type="GO" id="GO:0005886">
    <property type="term" value="C:plasma membrane"/>
    <property type="evidence" value="ECO:0007669"/>
    <property type="project" value="UniProtKB-SubCell"/>
</dbReference>
<dbReference type="GO" id="GO:0046872">
    <property type="term" value="F:metal ion binding"/>
    <property type="evidence" value="ECO:0007669"/>
    <property type="project" value="UniProtKB-KW"/>
</dbReference>
<dbReference type="GO" id="GO:0005385">
    <property type="term" value="F:zinc ion transmembrane transporter activity"/>
    <property type="evidence" value="ECO:0007669"/>
    <property type="project" value="UniProtKB-UniRule"/>
</dbReference>
<dbReference type="HAMAP" id="MF_00548">
    <property type="entry name" value="ZupT"/>
    <property type="match status" value="1"/>
</dbReference>
<dbReference type="InterPro" id="IPR003689">
    <property type="entry name" value="ZIP"/>
</dbReference>
<dbReference type="InterPro" id="IPR023498">
    <property type="entry name" value="Zn_transptr_ZupT"/>
</dbReference>
<dbReference type="NCBIfam" id="NF003243">
    <property type="entry name" value="PRK04201.1"/>
    <property type="match status" value="1"/>
</dbReference>
<dbReference type="PANTHER" id="PTHR11040:SF205">
    <property type="entry name" value="ZINC TRANSPORTER ZUPT"/>
    <property type="match status" value="1"/>
</dbReference>
<dbReference type="PANTHER" id="PTHR11040">
    <property type="entry name" value="ZINC/IRON TRANSPORTER"/>
    <property type="match status" value="1"/>
</dbReference>
<dbReference type="Pfam" id="PF02535">
    <property type="entry name" value="Zip"/>
    <property type="match status" value="1"/>
</dbReference>
<comment type="function">
    <text evidence="1">Mediates zinc uptake. May also transport other divalent cations.</text>
</comment>
<comment type="catalytic activity">
    <reaction evidence="1">
        <text>Zn(2+)(in) = Zn(2+)(out)</text>
        <dbReference type="Rhea" id="RHEA:29351"/>
        <dbReference type="ChEBI" id="CHEBI:29105"/>
    </reaction>
</comment>
<comment type="subcellular location">
    <subcellularLocation>
        <location evidence="1">Cell inner membrane</location>
        <topology evidence="1 2">Multi-pass membrane protein</topology>
    </subcellularLocation>
</comment>
<comment type="similarity">
    <text evidence="1 2">Belongs to the ZIP transporter (TC 2.A.5) family. ZupT subfamily.</text>
</comment>
<name>ZUPT_NEIMA</name>
<organism>
    <name type="scientific">Neisseria meningitidis serogroup A / serotype 4A (strain DSM 15465 / Z2491)</name>
    <dbReference type="NCBI Taxonomy" id="122587"/>
    <lineage>
        <taxon>Bacteria</taxon>
        <taxon>Pseudomonadati</taxon>
        <taxon>Pseudomonadota</taxon>
        <taxon>Betaproteobacteria</taxon>
        <taxon>Neisseriales</taxon>
        <taxon>Neisseriaceae</taxon>
        <taxon>Neisseria</taxon>
    </lineage>
</organism>
<feature type="chain" id="PRO_0000207274" description="Zinc transporter ZupT">
    <location>
        <begin position="1"/>
        <end position="269"/>
    </location>
</feature>
<feature type="transmembrane region" description="Helical" evidence="1">
    <location>
        <begin position="12"/>
        <end position="32"/>
    </location>
</feature>
<feature type="transmembrane region" description="Helical" evidence="1">
    <location>
        <begin position="41"/>
        <end position="61"/>
    </location>
</feature>
<feature type="transmembrane region" description="Helical" evidence="1">
    <location>
        <begin position="75"/>
        <end position="95"/>
    </location>
</feature>
<feature type="transmembrane region" description="Helical" evidence="1">
    <location>
        <begin position="126"/>
        <end position="146"/>
    </location>
</feature>
<feature type="transmembrane region" description="Helical" evidence="1">
    <location>
        <begin position="152"/>
        <end position="172"/>
    </location>
</feature>
<feature type="transmembrane region" description="Helical" evidence="1">
    <location>
        <begin position="187"/>
        <end position="207"/>
    </location>
</feature>
<feature type="transmembrane region" description="Helical" evidence="1">
    <location>
        <begin position="211"/>
        <end position="231"/>
    </location>
</feature>
<feature type="transmembrane region" description="Helical" evidence="1">
    <location>
        <begin position="249"/>
        <end position="269"/>
    </location>
</feature>
<feature type="binding site" description="M2 metal binding site" evidence="1">
    <location>
        <position position="136"/>
    </location>
    <ligand>
        <name>Fe(2+)</name>
        <dbReference type="ChEBI" id="CHEBI:29033"/>
    </ligand>
</feature>
<feature type="binding site" description="M2 metal binding site" evidence="1">
    <location>
        <position position="139"/>
    </location>
    <ligand>
        <name>Fe(2+)</name>
        <dbReference type="ChEBI" id="CHEBI:29033"/>
    </ligand>
</feature>
<feature type="binding site" description="M1 metal binding site" evidence="1">
    <location>
        <position position="139"/>
    </location>
    <ligand>
        <name>Zn(2+)</name>
        <dbReference type="ChEBI" id="CHEBI:29105"/>
    </ligand>
</feature>
<feature type="binding site" description="M1 metal binding site" evidence="1">
    <location>
        <position position="164"/>
    </location>
    <ligand>
        <name>Zn(2+)</name>
        <dbReference type="ChEBI" id="CHEBI:29105"/>
    </ligand>
</feature>
<feature type="binding site" description="M2 metal binding site" evidence="1">
    <location>
        <position position="165"/>
    </location>
    <ligand>
        <name>Fe(2+)</name>
        <dbReference type="ChEBI" id="CHEBI:29033"/>
    </ligand>
</feature>
<feature type="binding site" description="M2 metal binding site" evidence="1">
    <location>
        <position position="168"/>
    </location>
    <ligand>
        <name>Fe(2+)</name>
        <dbReference type="ChEBI" id="CHEBI:29033"/>
    </ligand>
</feature>
<feature type="binding site" description="M1 metal binding site" evidence="1">
    <location>
        <position position="168"/>
    </location>
    <ligand>
        <name>Zn(2+)</name>
        <dbReference type="ChEBI" id="CHEBI:29105"/>
    </ligand>
</feature>
<feature type="binding site" description="M2 metal binding site" evidence="1">
    <location>
        <position position="197"/>
    </location>
    <ligand>
        <name>Fe(2+)</name>
        <dbReference type="ChEBI" id="CHEBI:29033"/>
    </ligand>
</feature>
<keyword id="KW-0997">Cell inner membrane</keyword>
<keyword id="KW-1003">Cell membrane</keyword>
<keyword id="KW-0406">Ion transport</keyword>
<keyword id="KW-0408">Iron</keyword>
<keyword id="KW-0472">Membrane</keyword>
<keyword id="KW-0479">Metal-binding</keyword>
<keyword id="KW-0812">Transmembrane</keyword>
<keyword id="KW-1133">Transmembrane helix</keyword>
<keyword id="KW-0813">Transport</keyword>
<keyword id="KW-0862">Zinc</keyword>
<keyword id="KW-0864">Zinc transport</keyword>